<sequence>MSFRCFSFALFLLLLTFISHVSASYIPNKKSFKSRSFKNQFLIPQNIARAAVGLRPLVWDDKLTHYAQWYANQRRNDCALEHSNGPYGENIFWGSGVGWNPAQAVSAWVDEKQFYNYWHNSCVDGEMCGHYTQVVWGSTTKVGCASVVCSDDKGTFMTCNYDPPGNYYGERPY</sequence>
<keyword id="KW-1015">Disulfide bond</keyword>
<keyword id="KW-0568">Pathogenesis-related protein</keyword>
<keyword id="KW-0611">Plant defense</keyword>
<keyword id="KW-0732">Signal</keyword>
<evidence type="ECO:0000250" key="1"/>
<evidence type="ECO:0000255" key="2"/>
<evidence type="ECO:0000305" key="3"/>
<proteinExistence type="evidence at transcript level"/>
<organism>
    <name type="scientific">Medicago truncatula</name>
    <name type="common">Barrel medic</name>
    <name type="synonym">Medicago tribuloides</name>
    <dbReference type="NCBI Taxonomy" id="3880"/>
    <lineage>
        <taxon>Eukaryota</taxon>
        <taxon>Viridiplantae</taxon>
        <taxon>Streptophyta</taxon>
        <taxon>Embryophyta</taxon>
        <taxon>Tracheophyta</taxon>
        <taxon>Spermatophyta</taxon>
        <taxon>Magnoliopsida</taxon>
        <taxon>eudicotyledons</taxon>
        <taxon>Gunneridae</taxon>
        <taxon>Pentapetalae</taxon>
        <taxon>rosids</taxon>
        <taxon>fabids</taxon>
        <taxon>Fabales</taxon>
        <taxon>Fabaceae</taxon>
        <taxon>Papilionoideae</taxon>
        <taxon>50 kb inversion clade</taxon>
        <taxon>NPAAA clade</taxon>
        <taxon>Hologalegina</taxon>
        <taxon>IRL clade</taxon>
        <taxon>Trifolieae</taxon>
        <taxon>Medicago</taxon>
    </lineage>
</organism>
<comment type="function">
    <text>Probably involved in the defense reaction of plants against pathogens.</text>
</comment>
<comment type="similarity">
    <text evidence="3">Belongs to the CRISP family.</text>
</comment>
<protein>
    <recommendedName>
        <fullName>Pathogenesis-related protein PR-1</fullName>
    </recommendedName>
</protein>
<gene>
    <name type="primary">PR-1</name>
</gene>
<accession>Q40374</accession>
<name>PR1_MEDTR</name>
<reference key="1">
    <citation type="journal article" date="1995" name="Plant Physiol.">
        <title>A cDNA encoding a PR-1-like protein in the model legume Medicago truncatula.</title>
        <authorList>
            <person name="Szybiak-Strozycka U."/>
            <person name="Lescure N."/>
            <person name="Cullimore J.V."/>
            <person name="Gamas P."/>
        </authorList>
    </citation>
    <scope>NUCLEOTIDE SEQUENCE [MRNA]</scope>
    <source>
        <tissue>Root</tissue>
    </source>
</reference>
<feature type="signal peptide" evidence="2">
    <location>
        <begin position="1"/>
        <end position="23"/>
    </location>
</feature>
<feature type="chain" id="PRO_0000006312" description="Pathogenesis-related protein PR-1">
    <location>
        <begin position="24"/>
        <end position="173"/>
    </location>
</feature>
<feature type="domain" description="SCP">
    <location>
        <begin position="45"/>
        <end position="161"/>
    </location>
</feature>
<feature type="disulfide bond" evidence="1">
    <location>
        <begin position="78"/>
        <end position="149"/>
    </location>
</feature>
<feature type="disulfide bond" evidence="1">
    <location>
        <begin position="122"/>
        <end position="128"/>
    </location>
</feature>
<feature type="disulfide bond" evidence="1">
    <location>
        <begin position="144"/>
        <end position="159"/>
    </location>
</feature>
<dbReference type="EMBL" id="X79778">
    <property type="protein sequence ID" value="CAA56174.1"/>
    <property type="molecule type" value="mRNA"/>
</dbReference>
<dbReference type="PIR" id="S47171">
    <property type="entry name" value="S47171"/>
</dbReference>
<dbReference type="SMR" id="Q40374"/>
<dbReference type="PaxDb" id="3880-AES92366"/>
<dbReference type="EnsemblPlants" id="rna27636">
    <property type="protein sequence ID" value="RHN64779.1"/>
    <property type="gene ID" value="gene27636"/>
</dbReference>
<dbReference type="GeneID" id="11441780"/>
<dbReference type="Gramene" id="rna27636">
    <property type="protein sequence ID" value="RHN64779.1"/>
    <property type="gene ID" value="gene27636"/>
</dbReference>
<dbReference type="KEGG" id="mtr:11441780"/>
<dbReference type="eggNOG" id="KOG3017">
    <property type="taxonomic scope" value="Eukaryota"/>
</dbReference>
<dbReference type="HOGENOM" id="CLU_035730_8_1_1"/>
<dbReference type="OMA" id="ERYQCHP"/>
<dbReference type="OrthoDB" id="337038at2759"/>
<dbReference type="ExpressionAtlas" id="Q40374">
    <property type="expression patterns" value="differential"/>
</dbReference>
<dbReference type="GO" id="GO:0005576">
    <property type="term" value="C:extracellular region"/>
    <property type="evidence" value="ECO:0007669"/>
    <property type="project" value="InterPro"/>
</dbReference>
<dbReference type="GO" id="GO:0006952">
    <property type="term" value="P:defense response"/>
    <property type="evidence" value="ECO:0007669"/>
    <property type="project" value="UniProtKB-KW"/>
</dbReference>
<dbReference type="CDD" id="cd05381">
    <property type="entry name" value="CAP_PR-1"/>
    <property type="match status" value="1"/>
</dbReference>
<dbReference type="FunFam" id="3.40.33.10:FF:000006">
    <property type="entry name" value="Putative pathogenesis-related protein 1"/>
    <property type="match status" value="1"/>
</dbReference>
<dbReference type="Gene3D" id="3.40.33.10">
    <property type="entry name" value="CAP"/>
    <property type="match status" value="1"/>
</dbReference>
<dbReference type="InterPro" id="IPR018244">
    <property type="entry name" value="Allrgn_V5/Tpx1_CS"/>
</dbReference>
<dbReference type="InterPro" id="IPR014044">
    <property type="entry name" value="CAP_dom"/>
</dbReference>
<dbReference type="InterPro" id="IPR035940">
    <property type="entry name" value="CAP_sf"/>
</dbReference>
<dbReference type="InterPro" id="IPR001283">
    <property type="entry name" value="CRISP-related"/>
</dbReference>
<dbReference type="InterPro" id="IPR002413">
    <property type="entry name" value="V5_allergen-like"/>
</dbReference>
<dbReference type="PANTHER" id="PTHR10334">
    <property type="entry name" value="CYSTEINE-RICH SECRETORY PROTEIN-RELATED"/>
    <property type="match status" value="1"/>
</dbReference>
<dbReference type="Pfam" id="PF00188">
    <property type="entry name" value="CAP"/>
    <property type="match status" value="1"/>
</dbReference>
<dbReference type="PRINTS" id="PR00838">
    <property type="entry name" value="V5ALLERGEN"/>
</dbReference>
<dbReference type="PRINTS" id="PR00837">
    <property type="entry name" value="V5TPXLIKE"/>
</dbReference>
<dbReference type="SMART" id="SM00198">
    <property type="entry name" value="SCP"/>
    <property type="match status" value="1"/>
</dbReference>
<dbReference type="SUPFAM" id="SSF55797">
    <property type="entry name" value="PR-1-like"/>
    <property type="match status" value="1"/>
</dbReference>
<dbReference type="PROSITE" id="PS01009">
    <property type="entry name" value="CRISP_1"/>
    <property type="match status" value="1"/>
</dbReference>
<dbReference type="PROSITE" id="PS01010">
    <property type="entry name" value="CRISP_2"/>
    <property type="match status" value="1"/>
</dbReference>